<reference key="1">
    <citation type="journal article" date="2005" name="Science">
        <title>The transcriptional landscape of the mammalian genome.</title>
        <authorList>
            <person name="Carninci P."/>
            <person name="Kasukawa T."/>
            <person name="Katayama S."/>
            <person name="Gough J."/>
            <person name="Frith M.C."/>
            <person name="Maeda N."/>
            <person name="Oyama R."/>
            <person name="Ravasi T."/>
            <person name="Lenhard B."/>
            <person name="Wells C."/>
            <person name="Kodzius R."/>
            <person name="Shimokawa K."/>
            <person name="Bajic V.B."/>
            <person name="Brenner S.E."/>
            <person name="Batalov S."/>
            <person name="Forrest A.R."/>
            <person name="Zavolan M."/>
            <person name="Davis M.J."/>
            <person name="Wilming L.G."/>
            <person name="Aidinis V."/>
            <person name="Allen J.E."/>
            <person name="Ambesi-Impiombato A."/>
            <person name="Apweiler R."/>
            <person name="Aturaliya R.N."/>
            <person name="Bailey T.L."/>
            <person name="Bansal M."/>
            <person name="Baxter L."/>
            <person name="Beisel K.W."/>
            <person name="Bersano T."/>
            <person name="Bono H."/>
            <person name="Chalk A.M."/>
            <person name="Chiu K.P."/>
            <person name="Choudhary V."/>
            <person name="Christoffels A."/>
            <person name="Clutterbuck D.R."/>
            <person name="Crowe M.L."/>
            <person name="Dalla E."/>
            <person name="Dalrymple B.P."/>
            <person name="de Bono B."/>
            <person name="Della Gatta G."/>
            <person name="di Bernardo D."/>
            <person name="Down T."/>
            <person name="Engstrom P."/>
            <person name="Fagiolini M."/>
            <person name="Faulkner G."/>
            <person name="Fletcher C.F."/>
            <person name="Fukushima T."/>
            <person name="Furuno M."/>
            <person name="Futaki S."/>
            <person name="Gariboldi M."/>
            <person name="Georgii-Hemming P."/>
            <person name="Gingeras T.R."/>
            <person name="Gojobori T."/>
            <person name="Green R.E."/>
            <person name="Gustincich S."/>
            <person name="Harbers M."/>
            <person name="Hayashi Y."/>
            <person name="Hensch T.K."/>
            <person name="Hirokawa N."/>
            <person name="Hill D."/>
            <person name="Huminiecki L."/>
            <person name="Iacono M."/>
            <person name="Ikeo K."/>
            <person name="Iwama A."/>
            <person name="Ishikawa T."/>
            <person name="Jakt M."/>
            <person name="Kanapin A."/>
            <person name="Katoh M."/>
            <person name="Kawasawa Y."/>
            <person name="Kelso J."/>
            <person name="Kitamura H."/>
            <person name="Kitano H."/>
            <person name="Kollias G."/>
            <person name="Krishnan S.P."/>
            <person name="Kruger A."/>
            <person name="Kummerfeld S.K."/>
            <person name="Kurochkin I.V."/>
            <person name="Lareau L.F."/>
            <person name="Lazarevic D."/>
            <person name="Lipovich L."/>
            <person name="Liu J."/>
            <person name="Liuni S."/>
            <person name="McWilliam S."/>
            <person name="Madan Babu M."/>
            <person name="Madera M."/>
            <person name="Marchionni L."/>
            <person name="Matsuda H."/>
            <person name="Matsuzawa S."/>
            <person name="Miki H."/>
            <person name="Mignone F."/>
            <person name="Miyake S."/>
            <person name="Morris K."/>
            <person name="Mottagui-Tabar S."/>
            <person name="Mulder N."/>
            <person name="Nakano N."/>
            <person name="Nakauchi H."/>
            <person name="Ng P."/>
            <person name="Nilsson R."/>
            <person name="Nishiguchi S."/>
            <person name="Nishikawa S."/>
            <person name="Nori F."/>
            <person name="Ohara O."/>
            <person name="Okazaki Y."/>
            <person name="Orlando V."/>
            <person name="Pang K.C."/>
            <person name="Pavan W.J."/>
            <person name="Pavesi G."/>
            <person name="Pesole G."/>
            <person name="Petrovsky N."/>
            <person name="Piazza S."/>
            <person name="Reed J."/>
            <person name="Reid J.F."/>
            <person name="Ring B.Z."/>
            <person name="Ringwald M."/>
            <person name="Rost B."/>
            <person name="Ruan Y."/>
            <person name="Salzberg S.L."/>
            <person name="Sandelin A."/>
            <person name="Schneider C."/>
            <person name="Schoenbach C."/>
            <person name="Sekiguchi K."/>
            <person name="Semple C.A."/>
            <person name="Seno S."/>
            <person name="Sessa L."/>
            <person name="Sheng Y."/>
            <person name="Shibata Y."/>
            <person name="Shimada H."/>
            <person name="Shimada K."/>
            <person name="Silva D."/>
            <person name="Sinclair B."/>
            <person name="Sperling S."/>
            <person name="Stupka E."/>
            <person name="Sugiura K."/>
            <person name="Sultana R."/>
            <person name="Takenaka Y."/>
            <person name="Taki K."/>
            <person name="Tammoja K."/>
            <person name="Tan S.L."/>
            <person name="Tang S."/>
            <person name="Taylor M.S."/>
            <person name="Tegner J."/>
            <person name="Teichmann S.A."/>
            <person name="Ueda H.R."/>
            <person name="van Nimwegen E."/>
            <person name="Verardo R."/>
            <person name="Wei C.L."/>
            <person name="Yagi K."/>
            <person name="Yamanishi H."/>
            <person name="Zabarovsky E."/>
            <person name="Zhu S."/>
            <person name="Zimmer A."/>
            <person name="Hide W."/>
            <person name="Bult C."/>
            <person name="Grimmond S.M."/>
            <person name="Teasdale R.D."/>
            <person name="Liu E.T."/>
            <person name="Brusic V."/>
            <person name="Quackenbush J."/>
            <person name="Wahlestedt C."/>
            <person name="Mattick J.S."/>
            <person name="Hume D.A."/>
            <person name="Kai C."/>
            <person name="Sasaki D."/>
            <person name="Tomaru Y."/>
            <person name="Fukuda S."/>
            <person name="Kanamori-Katayama M."/>
            <person name="Suzuki M."/>
            <person name="Aoki J."/>
            <person name="Arakawa T."/>
            <person name="Iida J."/>
            <person name="Imamura K."/>
            <person name="Itoh M."/>
            <person name="Kato T."/>
            <person name="Kawaji H."/>
            <person name="Kawagashira N."/>
            <person name="Kawashima T."/>
            <person name="Kojima M."/>
            <person name="Kondo S."/>
            <person name="Konno H."/>
            <person name="Nakano K."/>
            <person name="Ninomiya N."/>
            <person name="Nishio T."/>
            <person name="Okada M."/>
            <person name="Plessy C."/>
            <person name="Shibata K."/>
            <person name="Shiraki T."/>
            <person name="Suzuki S."/>
            <person name="Tagami M."/>
            <person name="Waki K."/>
            <person name="Watahiki A."/>
            <person name="Okamura-Oho Y."/>
            <person name="Suzuki H."/>
            <person name="Kawai J."/>
            <person name="Hayashizaki Y."/>
        </authorList>
    </citation>
    <scope>NUCLEOTIDE SEQUENCE [LARGE SCALE MRNA] (ISOFORMS 1; 2 AND 3)</scope>
    <source>
        <strain>C57BL/6J</strain>
        <tissue>Olfactory bulb</tissue>
        <tissue>Testis</tissue>
        <tissue>Thymus</tissue>
    </source>
</reference>
<reference key="2">
    <citation type="journal article" date="2004" name="Genome Res.">
        <title>The status, quality, and expansion of the NIH full-length cDNA project: the Mammalian Gene Collection (MGC).</title>
        <authorList>
            <consortium name="The MGC Project Team"/>
        </authorList>
    </citation>
    <scope>NUCLEOTIDE SEQUENCE [LARGE SCALE MRNA] (ISOFORM 1)</scope>
    <source>
        <strain>C57BL/6J</strain>
        <tissue>Eye</tissue>
    </source>
</reference>
<reference key="3">
    <citation type="journal article" date="2010" name="Cell">
        <title>A tissue-specific atlas of mouse protein phosphorylation and expression.</title>
        <authorList>
            <person name="Huttlin E.L."/>
            <person name="Jedrychowski M.P."/>
            <person name="Elias J.E."/>
            <person name="Goswami T."/>
            <person name="Rad R."/>
            <person name="Beausoleil S.A."/>
            <person name="Villen J."/>
            <person name="Haas W."/>
            <person name="Sowa M.E."/>
            <person name="Gygi S.P."/>
        </authorList>
    </citation>
    <scope>IDENTIFICATION BY MASS SPECTROMETRY [LARGE SCALE ANALYSIS]</scope>
    <source>
        <tissue>Testis</tissue>
    </source>
</reference>
<feature type="chain" id="PRO_0000266039" description="Transmembrane protein 255A">
    <location>
        <begin position="1"/>
        <end position="351"/>
    </location>
</feature>
<feature type="transmembrane region" description="Helical" evidence="1">
    <location>
        <begin position="30"/>
        <end position="50"/>
    </location>
</feature>
<feature type="transmembrane region" description="Helical" evidence="1">
    <location>
        <begin position="57"/>
        <end position="77"/>
    </location>
</feature>
<feature type="transmembrane region" description="Helical" evidence="1">
    <location>
        <begin position="89"/>
        <end position="109"/>
    </location>
</feature>
<feature type="transmembrane region" description="Helical" evidence="1">
    <location>
        <begin position="226"/>
        <end position="246"/>
    </location>
</feature>
<feature type="region of interest" description="Disordered" evidence="2">
    <location>
        <begin position="302"/>
        <end position="331"/>
    </location>
</feature>
<feature type="splice variant" id="VSP_021922" description="In isoform 2." evidence="3">
    <location>
        <begin position="119"/>
        <end position="141"/>
    </location>
</feature>
<feature type="splice variant" id="VSP_021923" description="In isoform 3." evidence="3">
    <original>HSGVFPSSPPSGLSDEQEPQSPSPSPSYMWSSSAPPRYSPPYYPPFEKPPPYSP</original>
    <variation>VFSWCVEKYSRHSKTTGNANLLLTAMVQETMGRA</variation>
    <location>
        <begin position="298"/>
        <end position="351"/>
    </location>
</feature>
<feature type="sequence conflict" description="In Ref. 1; BAC37196." evidence="4" ref="1">
    <original>A</original>
    <variation>T</variation>
    <location>
        <position position="49"/>
    </location>
</feature>
<feature type="sequence conflict" description="In Ref. 2; AAH62956." evidence="4" ref="2">
    <original>P</original>
    <variation>R</variation>
    <location>
        <position position="321"/>
    </location>
</feature>
<keyword id="KW-0025">Alternative splicing</keyword>
<keyword id="KW-0472">Membrane</keyword>
<keyword id="KW-1185">Reference proteome</keyword>
<keyword id="KW-0812">Transmembrane</keyword>
<keyword id="KW-1133">Transmembrane helix</keyword>
<comment type="subcellular location">
    <subcellularLocation>
        <location evidence="4">Membrane</location>
        <topology evidence="4">Multi-pass membrane protein</topology>
    </subcellularLocation>
</comment>
<comment type="alternative products">
    <event type="alternative splicing"/>
    <isoform>
        <id>Q8BHW5-1</id>
        <name>1</name>
        <sequence type="displayed"/>
    </isoform>
    <isoform>
        <id>Q8BHW5-2</id>
        <name>2</name>
        <sequence type="described" ref="VSP_021922"/>
    </isoform>
    <isoform>
        <id>Q8BHW5-3</id>
        <name>3</name>
        <sequence type="described" ref="VSP_021923"/>
    </isoform>
</comment>
<comment type="similarity">
    <text evidence="4">Belongs to the TMEM255 family.</text>
</comment>
<name>T255A_MOUSE</name>
<protein>
    <recommendedName>
        <fullName>Transmembrane protein 255A</fullName>
    </recommendedName>
    <alternativeName>
        <fullName>Protein FAM70A</fullName>
    </alternativeName>
</protein>
<proteinExistence type="evidence at protein level"/>
<dbReference type="EMBL" id="AK041985">
    <property type="protein sequence ID" value="BAC31122.1"/>
    <property type="molecule type" value="mRNA"/>
</dbReference>
<dbReference type="EMBL" id="AK077178">
    <property type="protein sequence ID" value="BAC36664.1"/>
    <property type="molecule type" value="mRNA"/>
</dbReference>
<dbReference type="EMBL" id="AK078264">
    <property type="protein sequence ID" value="BAC37196.1"/>
    <property type="molecule type" value="mRNA"/>
</dbReference>
<dbReference type="EMBL" id="BC062956">
    <property type="protein sequence ID" value="AAH62956.1"/>
    <property type="molecule type" value="mRNA"/>
</dbReference>
<dbReference type="CCDS" id="CCDS30089.1">
    <molecule id="Q8BHW5-1"/>
</dbReference>
<dbReference type="CCDS" id="CCDS72367.1">
    <molecule id="Q8BHW5-2"/>
</dbReference>
<dbReference type="CCDS" id="CCDS81122.1">
    <molecule id="Q8BHW5-3"/>
</dbReference>
<dbReference type="RefSeq" id="NP_001276656.1">
    <molecule id="Q8BHW5-3"/>
    <property type="nucleotide sequence ID" value="NM_001289727.1"/>
</dbReference>
<dbReference type="RefSeq" id="NP_001276657.1">
    <molecule id="Q8BHW5-2"/>
    <property type="nucleotide sequence ID" value="NM_001289728.1"/>
</dbReference>
<dbReference type="RefSeq" id="NP_766518.3">
    <molecule id="Q8BHW5-1"/>
    <property type="nucleotide sequence ID" value="NM_172930.4"/>
</dbReference>
<dbReference type="FunCoup" id="Q8BHW5">
    <property type="interactions" value="5"/>
</dbReference>
<dbReference type="STRING" id="10090.ENSMUSP00000064511"/>
<dbReference type="GlyGen" id="Q8BHW5">
    <property type="glycosylation" value="1 site"/>
</dbReference>
<dbReference type="iPTMnet" id="Q8BHW5"/>
<dbReference type="PhosphoSitePlus" id="Q8BHW5"/>
<dbReference type="PaxDb" id="10090-ENSMUSP00000064511"/>
<dbReference type="ProteomicsDB" id="254633">
    <molecule id="Q8BHW5-1"/>
</dbReference>
<dbReference type="ProteomicsDB" id="254634">
    <molecule id="Q8BHW5-2"/>
</dbReference>
<dbReference type="ProteomicsDB" id="254635">
    <molecule id="Q8BHW5-3"/>
</dbReference>
<dbReference type="Antibodypedia" id="29876">
    <property type="antibodies" value="85 antibodies from 17 providers"/>
</dbReference>
<dbReference type="Ensembl" id="ENSMUST00000066498.8">
    <molecule id="Q8BHW5-1"/>
    <property type="protein sequence ID" value="ENSMUSP00000064511.8"/>
    <property type="gene ID" value="ENSMUSG00000036502.15"/>
</dbReference>
<dbReference type="Ensembl" id="ENSMUST00000089054.11">
    <molecule id="Q8BHW5-2"/>
    <property type="protein sequence ID" value="ENSMUSP00000086455.5"/>
    <property type="gene ID" value="ENSMUSG00000036502.15"/>
</dbReference>
<dbReference type="Ensembl" id="ENSMUST00000089056.10">
    <molecule id="Q8BHW5-3"/>
    <property type="protein sequence ID" value="ENSMUSP00000086457.4"/>
    <property type="gene ID" value="ENSMUSG00000036502.15"/>
</dbReference>
<dbReference type="GeneID" id="245386"/>
<dbReference type="KEGG" id="mmu:245386"/>
<dbReference type="UCSC" id="uc009szr.3">
    <molecule id="Q8BHW5-1"/>
    <property type="organism name" value="mouse"/>
</dbReference>
<dbReference type="UCSC" id="uc009szs.3">
    <molecule id="Q8BHW5-2"/>
    <property type="organism name" value="mouse"/>
</dbReference>
<dbReference type="UCSC" id="uc033jpk.1">
    <molecule id="Q8BHW5-3"/>
    <property type="organism name" value="mouse"/>
</dbReference>
<dbReference type="AGR" id="MGI:3045722"/>
<dbReference type="CTD" id="55026"/>
<dbReference type="MGI" id="MGI:3045722">
    <property type="gene designation" value="Tmem255a"/>
</dbReference>
<dbReference type="VEuPathDB" id="HostDB:ENSMUSG00000036502"/>
<dbReference type="eggNOG" id="ENOG502QVX8">
    <property type="taxonomic scope" value="Eukaryota"/>
</dbReference>
<dbReference type="GeneTree" id="ENSGT00940000160471"/>
<dbReference type="HOGENOM" id="CLU_068698_1_0_1"/>
<dbReference type="InParanoid" id="Q8BHW5"/>
<dbReference type="OMA" id="MWASNAP"/>
<dbReference type="OrthoDB" id="10034004at2759"/>
<dbReference type="PhylomeDB" id="Q8BHW5"/>
<dbReference type="TreeFam" id="TF331034"/>
<dbReference type="BioGRID-ORCS" id="245386">
    <property type="hits" value="0 hits in 77 CRISPR screens"/>
</dbReference>
<dbReference type="PRO" id="PR:Q8BHW5"/>
<dbReference type="Proteomes" id="UP000000589">
    <property type="component" value="Chromosome X"/>
</dbReference>
<dbReference type="RNAct" id="Q8BHW5">
    <property type="molecule type" value="protein"/>
</dbReference>
<dbReference type="Bgee" id="ENSMUSG00000036502">
    <property type="expression patterns" value="Expressed in substantia nigra and 195 other cell types or tissues"/>
</dbReference>
<dbReference type="GO" id="GO:0016020">
    <property type="term" value="C:membrane"/>
    <property type="evidence" value="ECO:0007669"/>
    <property type="project" value="UniProtKB-SubCell"/>
</dbReference>
<dbReference type="GO" id="GO:0009617">
    <property type="term" value="P:response to bacterium"/>
    <property type="evidence" value="ECO:0000270"/>
    <property type="project" value="MGI"/>
</dbReference>
<dbReference type="InterPro" id="IPR028014">
    <property type="entry name" value="TMEM255"/>
</dbReference>
<dbReference type="PANTHER" id="PTHR33721:SF1">
    <property type="entry name" value="TRANSMEMBRANE PROTEIN 255A"/>
    <property type="match status" value="1"/>
</dbReference>
<dbReference type="PANTHER" id="PTHR33721">
    <property type="entry name" value="TRANSMEMBRANE PROTEIN 255B-LIKE"/>
    <property type="match status" value="1"/>
</dbReference>
<dbReference type="Pfam" id="PF14967">
    <property type="entry name" value="FAM70"/>
    <property type="match status" value="1"/>
</dbReference>
<organism>
    <name type="scientific">Mus musculus</name>
    <name type="common">Mouse</name>
    <dbReference type="NCBI Taxonomy" id="10090"/>
    <lineage>
        <taxon>Eukaryota</taxon>
        <taxon>Metazoa</taxon>
        <taxon>Chordata</taxon>
        <taxon>Craniata</taxon>
        <taxon>Vertebrata</taxon>
        <taxon>Euteleostomi</taxon>
        <taxon>Mammalia</taxon>
        <taxon>Eutheria</taxon>
        <taxon>Euarchontoglires</taxon>
        <taxon>Glires</taxon>
        <taxon>Rodentia</taxon>
        <taxon>Myomorpha</taxon>
        <taxon>Muroidea</taxon>
        <taxon>Muridae</taxon>
        <taxon>Murinae</taxon>
        <taxon>Mus</taxon>
        <taxon>Mus</taxon>
    </lineage>
</organism>
<sequence>MHQSLTQQRSSDMSLPDSMGAFNRRKRNSIYVTVTLLIVSMLILTVGLAATTRTQNVTVGGYYPGVILGFGSFLGIIGSNLIENKRQMLVASIVFISFGVIAAFCCAIVDGVFAARHIDLKPLYANRCHYVPKTSQREAEEVITSSSKITPSTRALRNLTQAVKEVNCPQLSRGLCTPRIRGNTCFCCDLYNCGNRVEITGGYYEYIDVSSCQDIIHLYHLLWSATILNIVGLFLGIITAAVLGGFKDMNPTLPALNCSVENAHPTVSYYARPQVASYNTYYHSPPHLPPYSAYDFQHSGVFPSSPPSGLSDEQEPQSPSPSPSYMWSSSAPPRYSPPYYPPFEKPPPYSP</sequence>
<gene>
    <name type="primary">Tmem255a</name>
    <name type="synonym">Fam70a</name>
</gene>
<accession>Q8BHW5</accession>
<accession>Q6P5C9</accession>
<accession>Q8BHV8</accession>
<accession>Q8BHZ6</accession>
<evidence type="ECO:0000255" key="1"/>
<evidence type="ECO:0000256" key="2">
    <source>
        <dbReference type="SAM" id="MobiDB-lite"/>
    </source>
</evidence>
<evidence type="ECO:0000303" key="3">
    <source>
    </source>
</evidence>
<evidence type="ECO:0000305" key="4"/>